<evidence type="ECO:0000255" key="1">
    <source>
        <dbReference type="HAMAP-Rule" id="MF_01077"/>
    </source>
</evidence>
<evidence type="ECO:0000305" key="2"/>
<accession>Q1CEL1</accession>
<accession>C4GXU9</accession>
<comment type="function">
    <text evidence="1">Required for maturation of 30S ribosomal subunits.</text>
</comment>
<comment type="subcellular location">
    <subcellularLocation>
        <location evidence="1">Cytoplasm</location>
    </subcellularLocation>
</comment>
<comment type="similarity">
    <text evidence="1">Belongs to the RimP family.</text>
</comment>
<comment type="sequence caution" evidence="2">
    <conflict type="erroneous initiation">
        <sequence resource="EMBL-CDS" id="EEO75749"/>
    </conflict>
</comment>
<dbReference type="EMBL" id="CP000305">
    <property type="protein sequence ID" value="ABG19569.1"/>
    <property type="molecule type" value="Genomic_DNA"/>
</dbReference>
<dbReference type="EMBL" id="ACNQ01000017">
    <property type="protein sequence ID" value="EEO75749.1"/>
    <property type="status" value="ALT_INIT"/>
    <property type="molecule type" value="Genomic_DNA"/>
</dbReference>
<dbReference type="RefSeq" id="WP_002222054.1">
    <property type="nucleotide sequence ID" value="NZ_ACNQ01000017.1"/>
</dbReference>
<dbReference type="SMR" id="Q1CEL1"/>
<dbReference type="GeneID" id="97457868"/>
<dbReference type="KEGG" id="ypn:YPN_3242"/>
<dbReference type="HOGENOM" id="CLU_070525_1_1_6"/>
<dbReference type="Proteomes" id="UP000008936">
    <property type="component" value="Chromosome"/>
</dbReference>
<dbReference type="GO" id="GO:0005829">
    <property type="term" value="C:cytosol"/>
    <property type="evidence" value="ECO:0007669"/>
    <property type="project" value="TreeGrafter"/>
</dbReference>
<dbReference type="GO" id="GO:0000028">
    <property type="term" value="P:ribosomal small subunit assembly"/>
    <property type="evidence" value="ECO:0007669"/>
    <property type="project" value="TreeGrafter"/>
</dbReference>
<dbReference type="GO" id="GO:0006412">
    <property type="term" value="P:translation"/>
    <property type="evidence" value="ECO:0007669"/>
    <property type="project" value="TreeGrafter"/>
</dbReference>
<dbReference type="CDD" id="cd01734">
    <property type="entry name" value="YlxS_C"/>
    <property type="match status" value="1"/>
</dbReference>
<dbReference type="FunFam" id="2.30.30.180:FF:000001">
    <property type="entry name" value="Ribosome maturation factor RimP"/>
    <property type="match status" value="1"/>
</dbReference>
<dbReference type="FunFam" id="3.30.300.70:FF:000001">
    <property type="entry name" value="Ribosome maturation factor RimP"/>
    <property type="match status" value="1"/>
</dbReference>
<dbReference type="Gene3D" id="2.30.30.180">
    <property type="entry name" value="Ribosome maturation factor RimP, C-terminal domain"/>
    <property type="match status" value="1"/>
</dbReference>
<dbReference type="Gene3D" id="3.30.300.70">
    <property type="entry name" value="RimP-like superfamily, N-terminal"/>
    <property type="match status" value="1"/>
</dbReference>
<dbReference type="HAMAP" id="MF_01077">
    <property type="entry name" value="RimP"/>
    <property type="match status" value="1"/>
</dbReference>
<dbReference type="InterPro" id="IPR003728">
    <property type="entry name" value="Ribosome_maturation_RimP"/>
</dbReference>
<dbReference type="InterPro" id="IPR028998">
    <property type="entry name" value="RimP_C"/>
</dbReference>
<dbReference type="InterPro" id="IPR036847">
    <property type="entry name" value="RimP_C_sf"/>
</dbReference>
<dbReference type="InterPro" id="IPR028989">
    <property type="entry name" value="RimP_N"/>
</dbReference>
<dbReference type="InterPro" id="IPR035956">
    <property type="entry name" value="RimP_N_sf"/>
</dbReference>
<dbReference type="NCBIfam" id="NF000927">
    <property type="entry name" value="PRK00092.1-1"/>
    <property type="match status" value="1"/>
</dbReference>
<dbReference type="PANTHER" id="PTHR33867">
    <property type="entry name" value="RIBOSOME MATURATION FACTOR RIMP"/>
    <property type="match status" value="1"/>
</dbReference>
<dbReference type="PANTHER" id="PTHR33867:SF1">
    <property type="entry name" value="RIBOSOME MATURATION FACTOR RIMP"/>
    <property type="match status" value="1"/>
</dbReference>
<dbReference type="Pfam" id="PF17384">
    <property type="entry name" value="DUF150_C"/>
    <property type="match status" value="1"/>
</dbReference>
<dbReference type="Pfam" id="PF02576">
    <property type="entry name" value="RimP_N"/>
    <property type="match status" value="1"/>
</dbReference>
<dbReference type="SUPFAM" id="SSF74942">
    <property type="entry name" value="YhbC-like, C-terminal domain"/>
    <property type="match status" value="1"/>
</dbReference>
<dbReference type="SUPFAM" id="SSF75420">
    <property type="entry name" value="YhbC-like, N-terminal domain"/>
    <property type="match status" value="1"/>
</dbReference>
<organism>
    <name type="scientific">Yersinia pestis bv. Antiqua (strain Nepal516)</name>
    <dbReference type="NCBI Taxonomy" id="377628"/>
    <lineage>
        <taxon>Bacteria</taxon>
        <taxon>Pseudomonadati</taxon>
        <taxon>Pseudomonadota</taxon>
        <taxon>Gammaproteobacteria</taxon>
        <taxon>Enterobacterales</taxon>
        <taxon>Yersiniaceae</taxon>
        <taxon>Yersinia</taxon>
    </lineage>
</organism>
<gene>
    <name evidence="1" type="primary">rimP</name>
    <name type="ordered locus">YPN_3242</name>
    <name type="ORF">YP516_3682</name>
</gene>
<sequence>MSTLEQKLTEIISAPVEALGYELVGIEFIRGRQSTLRIYIDSDDGITVDACADVSHQVSAVLDVEDPITVAYNLEVSSPGLDRPMFTAEHYTRYLGEEVTLVLRMAMQNRRKWQGIIKAVDGEMITVTVDGKDEVFALSNIQKANLVPHF</sequence>
<feature type="chain" id="PRO_0000384810" description="Ribosome maturation factor RimP">
    <location>
        <begin position="1"/>
        <end position="150"/>
    </location>
</feature>
<name>RIMP_YERPN</name>
<reference key="1">
    <citation type="journal article" date="2006" name="J. Bacteriol.">
        <title>Complete genome sequence of Yersinia pestis strains Antiqua and Nepal516: evidence of gene reduction in an emerging pathogen.</title>
        <authorList>
            <person name="Chain P.S.G."/>
            <person name="Hu P."/>
            <person name="Malfatti S.A."/>
            <person name="Radnedge L."/>
            <person name="Larimer F."/>
            <person name="Vergez L.M."/>
            <person name="Worsham P."/>
            <person name="Chu M.C."/>
            <person name="Andersen G.L."/>
        </authorList>
    </citation>
    <scope>NUCLEOTIDE SEQUENCE [LARGE SCALE GENOMIC DNA]</scope>
    <source>
        <strain>Nepal516</strain>
    </source>
</reference>
<reference key="2">
    <citation type="submission" date="2009-04" db="EMBL/GenBank/DDBJ databases">
        <title>Yersinia pestis Nepal516A whole genome shotgun sequencing project.</title>
        <authorList>
            <person name="Plunkett G. III"/>
            <person name="Anderson B.D."/>
            <person name="Baumler D.J."/>
            <person name="Burland V."/>
            <person name="Cabot E.L."/>
            <person name="Glasner J.D."/>
            <person name="Mau B."/>
            <person name="Neeno-Eckwall E."/>
            <person name="Perna N.T."/>
            <person name="Munk A.C."/>
            <person name="Tapia R."/>
            <person name="Green L.D."/>
            <person name="Rogers Y.C."/>
            <person name="Detter J.C."/>
            <person name="Bruce D.C."/>
            <person name="Brettin T.S."/>
        </authorList>
    </citation>
    <scope>NUCLEOTIDE SEQUENCE [LARGE SCALE GENOMIC DNA]</scope>
    <source>
        <strain>Nepal516</strain>
    </source>
</reference>
<protein>
    <recommendedName>
        <fullName evidence="1">Ribosome maturation factor RimP</fullName>
    </recommendedName>
</protein>
<keyword id="KW-0963">Cytoplasm</keyword>
<keyword id="KW-0690">Ribosome biogenesis</keyword>
<proteinExistence type="inferred from homology"/>